<organism>
    <name type="scientific">Rhizobium meliloti (strain 1021)</name>
    <name type="common">Ensifer meliloti</name>
    <name type="synonym">Sinorhizobium meliloti</name>
    <dbReference type="NCBI Taxonomy" id="266834"/>
    <lineage>
        <taxon>Bacteria</taxon>
        <taxon>Pseudomonadati</taxon>
        <taxon>Pseudomonadota</taxon>
        <taxon>Alphaproteobacteria</taxon>
        <taxon>Hyphomicrobiales</taxon>
        <taxon>Rhizobiaceae</taxon>
        <taxon>Sinorhizobium/Ensifer group</taxon>
        <taxon>Sinorhizobium</taxon>
    </lineage>
</organism>
<feature type="chain" id="PRO_0000303510" description="tRNA N6-adenosine threonylcarbamoyltransferase">
    <location>
        <begin position="1"/>
        <end position="360"/>
    </location>
</feature>
<feature type="binding site" evidence="1">
    <location>
        <position position="115"/>
    </location>
    <ligand>
        <name>Fe cation</name>
        <dbReference type="ChEBI" id="CHEBI:24875"/>
    </ligand>
</feature>
<feature type="binding site" evidence="1">
    <location>
        <position position="119"/>
    </location>
    <ligand>
        <name>Fe cation</name>
        <dbReference type="ChEBI" id="CHEBI:24875"/>
    </ligand>
</feature>
<feature type="binding site" evidence="1">
    <location>
        <begin position="137"/>
        <end position="141"/>
    </location>
    <ligand>
        <name>substrate</name>
    </ligand>
</feature>
<feature type="binding site" evidence="1">
    <location>
        <position position="170"/>
    </location>
    <ligand>
        <name>substrate</name>
    </ligand>
</feature>
<feature type="binding site" evidence="1">
    <location>
        <position position="183"/>
    </location>
    <ligand>
        <name>substrate</name>
    </ligand>
</feature>
<feature type="binding site" evidence="1">
    <location>
        <position position="283"/>
    </location>
    <ligand>
        <name>substrate</name>
    </ligand>
</feature>
<feature type="binding site" evidence="1">
    <location>
        <position position="311"/>
    </location>
    <ligand>
        <name>Fe cation</name>
        <dbReference type="ChEBI" id="CHEBI:24875"/>
    </ligand>
</feature>
<gene>
    <name evidence="1" type="primary">tsaD</name>
    <name type="synonym">gcp</name>
    <name type="ordered locus">R03078</name>
    <name type="ORF">SMc03230</name>
</gene>
<comment type="function">
    <text evidence="1">Required for the formation of a threonylcarbamoyl group on adenosine at position 37 (t(6)A37) in tRNAs that read codons beginning with adenine. Is involved in the transfer of the threonylcarbamoyl moiety of threonylcarbamoyl-AMP (TC-AMP) to the N6 group of A37, together with TsaE and TsaB. TsaD likely plays a direct catalytic role in this reaction.</text>
</comment>
<comment type="catalytic activity">
    <reaction evidence="1">
        <text>L-threonylcarbamoyladenylate + adenosine(37) in tRNA = N(6)-L-threonylcarbamoyladenosine(37) in tRNA + AMP + H(+)</text>
        <dbReference type="Rhea" id="RHEA:37059"/>
        <dbReference type="Rhea" id="RHEA-COMP:10162"/>
        <dbReference type="Rhea" id="RHEA-COMP:10163"/>
        <dbReference type="ChEBI" id="CHEBI:15378"/>
        <dbReference type="ChEBI" id="CHEBI:73682"/>
        <dbReference type="ChEBI" id="CHEBI:74411"/>
        <dbReference type="ChEBI" id="CHEBI:74418"/>
        <dbReference type="ChEBI" id="CHEBI:456215"/>
        <dbReference type="EC" id="2.3.1.234"/>
    </reaction>
</comment>
<comment type="cofactor">
    <cofactor evidence="1">
        <name>Fe(2+)</name>
        <dbReference type="ChEBI" id="CHEBI:29033"/>
    </cofactor>
    <text evidence="1">Binds 1 Fe(2+) ion per subunit.</text>
</comment>
<comment type="subcellular location">
    <subcellularLocation>
        <location evidence="1">Cytoplasm</location>
    </subcellularLocation>
</comment>
<comment type="similarity">
    <text evidence="1">Belongs to the KAE1 / TsaD family.</text>
</comment>
<proteinExistence type="inferred from homology"/>
<keyword id="KW-0012">Acyltransferase</keyword>
<keyword id="KW-0963">Cytoplasm</keyword>
<keyword id="KW-0408">Iron</keyword>
<keyword id="KW-0479">Metal-binding</keyword>
<keyword id="KW-1185">Reference proteome</keyword>
<keyword id="KW-0808">Transferase</keyword>
<keyword id="KW-0819">tRNA processing</keyword>
<name>TSAD_RHIME</name>
<accession>Q92LH8</accession>
<reference key="1">
    <citation type="journal article" date="2001" name="Proc. Natl. Acad. Sci. U.S.A.">
        <title>Analysis of the chromosome sequence of the legume symbiont Sinorhizobium meliloti strain 1021.</title>
        <authorList>
            <person name="Capela D."/>
            <person name="Barloy-Hubler F."/>
            <person name="Gouzy J."/>
            <person name="Bothe G."/>
            <person name="Ampe F."/>
            <person name="Batut J."/>
            <person name="Boistard P."/>
            <person name="Becker A."/>
            <person name="Boutry M."/>
            <person name="Cadieu E."/>
            <person name="Dreano S."/>
            <person name="Gloux S."/>
            <person name="Godrie T."/>
            <person name="Goffeau A."/>
            <person name="Kahn D."/>
            <person name="Kiss E."/>
            <person name="Lelaure V."/>
            <person name="Masuy D."/>
            <person name="Pohl T."/>
            <person name="Portetelle D."/>
            <person name="Puehler A."/>
            <person name="Purnelle B."/>
            <person name="Ramsperger U."/>
            <person name="Renard C."/>
            <person name="Thebault P."/>
            <person name="Vandenbol M."/>
            <person name="Weidner S."/>
            <person name="Galibert F."/>
        </authorList>
    </citation>
    <scope>NUCLEOTIDE SEQUENCE [LARGE SCALE GENOMIC DNA]</scope>
    <source>
        <strain>1021</strain>
    </source>
</reference>
<reference key="2">
    <citation type="journal article" date="2001" name="Science">
        <title>The composite genome of the legume symbiont Sinorhizobium meliloti.</title>
        <authorList>
            <person name="Galibert F."/>
            <person name="Finan T.M."/>
            <person name="Long S.R."/>
            <person name="Puehler A."/>
            <person name="Abola P."/>
            <person name="Ampe F."/>
            <person name="Barloy-Hubler F."/>
            <person name="Barnett M.J."/>
            <person name="Becker A."/>
            <person name="Boistard P."/>
            <person name="Bothe G."/>
            <person name="Boutry M."/>
            <person name="Bowser L."/>
            <person name="Buhrmester J."/>
            <person name="Cadieu E."/>
            <person name="Capela D."/>
            <person name="Chain P."/>
            <person name="Cowie A."/>
            <person name="Davis R.W."/>
            <person name="Dreano S."/>
            <person name="Federspiel N.A."/>
            <person name="Fisher R.F."/>
            <person name="Gloux S."/>
            <person name="Godrie T."/>
            <person name="Goffeau A."/>
            <person name="Golding B."/>
            <person name="Gouzy J."/>
            <person name="Gurjal M."/>
            <person name="Hernandez-Lucas I."/>
            <person name="Hong A."/>
            <person name="Huizar L."/>
            <person name="Hyman R.W."/>
            <person name="Jones T."/>
            <person name="Kahn D."/>
            <person name="Kahn M.L."/>
            <person name="Kalman S."/>
            <person name="Keating D.H."/>
            <person name="Kiss E."/>
            <person name="Komp C."/>
            <person name="Lelaure V."/>
            <person name="Masuy D."/>
            <person name="Palm C."/>
            <person name="Peck M.C."/>
            <person name="Pohl T.M."/>
            <person name="Portetelle D."/>
            <person name="Purnelle B."/>
            <person name="Ramsperger U."/>
            <person name="Surzycki R."/>
            <person name="Thebault P."/>
            <person name="Vandenbol M."/>
            <person name="Vorhoelter F.J."/>
            <person name="Weidner S."/>
            <person name="Wells D.H."/>
            <person name="Wong K."/>
            <person name="Yeh K.-C."/>
            <person name="Batut J."/>
        </authorList>
    </citation>
    <scope>NUCLEOTIDE SEQUENCE [LARGE SCALE GENOMIC DNA]</scope>
    <source>
        <strain>1021</strain>
    </source>
</reference>
<protein>
    <recommendedName>
        <fullName evidence="1">tRNA N6-adenosine threonylcarbamoyltransferase</fullName>
        <ecNumber evidence="1">2.3.1.234</ecNumber>
    </recommendedName>
    <alternativeName>
        <fullName evidence="1">N6-L-threonylcarbamoyladenine synthase</fullName>
        <shortName evidence="1">t(6)A synthase</shortName>
    </alternativeName>
    <alternativeName>
        <fullName evidence="1">t(6)A37 threonylcarbamoyladenosine biosynthesis protein TsaD</fullName>
    </alternativeName>
    <alternativeName>
        <fullName evidence="1">tRNA threonylcarbamoyladenosine biosynthesis protein TsaD</fullName>
    </alternativeName>
</protein>
<dbReference type="EC" id="2.3.1.234" evidence="1"/>
<dbReference type="EMBL" id="AL591688">
    <property type="protein sequence ID" value="CAC47657.1"/>
    <property type="molecule type" value="Genomic_DNA"/>
</dbReference>
<dbReference type="RefSeq" id="NP_387184.1">
    <property type="nucleotide sequence ID" value="NC_003047.1"/>
</dbReference>
<dbReference type="SMR" id="Q92LH8"/>
<dbReference type="EnsemblBacteria" id="CAC47657">
    <property type="protein sequence ID" value="CAC47657"/>
    <property type="gene ID" value="SMc03230"/>
</dbReference>
<dbReference type="KEGG" id="sme:SMc03230"/>
<dbReference type="PATRIC" id="fig|266834.11.peg.4612"/>
<dbReference type="eggNOG" id="COG0533">
    <property type="taxonomic scope" value="Bacteria"/>
</dbReference>
<dbReference type="HOGENOM" id="CLU_023208_0_2_5"/>
<dbReference type="OrthoDB" id="9806197at2"/>
<dbReference type="Proteomes" id="UP000001976">
    <property type="component" value="Chromosome"/>
</dbReference>
<dbReference type="GO" id="GO:0005737">
    <property type="term" value="C:cytoplasm"/>
    <property type="evidence" value="ECO:0007669"/>
    <property type="project" value="UniProtKB-SubCell"/>
</dbReference>
<dbReference type="GO" id="GO:0005506">
    <property type="term" value="F:iron ion binding"/>
    <property type="evidence" value="ECO:0007669"/>
    <property type="project" value="UniProtKB-UniRule"/>
</dbReference>
<dbReference type="GO" id="GO:0061711">
    <property type="term" value="F:N(6)-L-threonylcarbamoyladenine synthase activity"/>
    <property type="evidence" value="ECO:0007669"/>
    <property type="project" value="UniProtKB-EC"/>
</dbReference>
<dbReference type="GO" id="GO:0002949">
    <property type="term" value="P:tRNA threonylcarbamoyladenosine modification"/>
    <property type="evidence" value="ECO:0007669"/>
    <property type="project" value="UniProtKB-UniRule"/>
</dbReference>
<dbReference type="CDD" id="cd24133">
    <property type="entry name" value="ASKHA_NBD_TsaD_bac"/>
    <property type="match status" value="1"/>
</dbReference>
<dbReference type="FunFam" id="3.30.420.40:FF:000040">
    <property type="entry name" value="tRNA N6-adenosine threonylcarbamoyltransferase"/>
    <property type="match status" value="1"/>
</dbReference>
<dbReference type="Gene3D" id="3.30.420.40">
    <property type="match status" value="2"/>
</dbReference>
<dbReference type="HAMAP" id="MF_01445">
    <property type="entry name" value="TsaD"/>
    <property type="match status" value="1"/>
</dbReference>
<dbReference type="InterPro" id="IPR043129">
    <property type="entry name" value="ATPase_NBD"/>
</dbReference>
<dbReference type="InterPro" id="IPR000905">
    <property type="entry name" value="Gcp-like_dom"/>
</dbReference>
<dbReference type="InterPro" id="IPR017861">
    <property type="entry name" value="KAE1/TsaD"/>
</dbReference>
<dbReference type="InterPro" id="IPR022450">
    <property type="entry name" value="TsaD"/>
</dbReference>
<dbReference type="NCBIfam" id="TIGR00329">
    <property type="entry name" value="gcp_kae1"/>
    <property type="match status" value="1"/>
</dbReference>
<dbReference type="NCBIfam" id="TIGR03723">
    <property type="entry name" value="T6A_TsaD_YgjD"/>
    <property type="match status" value="1"/>
</dbReference>
<dbReference type="PANTHER" id="PTHR11735">
    <property type="entry name" value="TRNA N6-ADENOSINE THREONYLCARBAMOYLTRANSFERASE"/>
    <property type="match status" value="1"/>
</dbReference>
<dbReference type="PANTHER" id="PTHR11735:SF6">
    <property type="entry name" value="TRNA N6-ADENOSINE THREONYLCARBAMOYLTRANSFERASE, MITOCHONDRIAL"/>
    <property type="match status" value="1"/>
</dbReference>
<dbReference type="Pfam" id="PF00814">
    <property type="entry name" value="TsaD"/>
    <property type="match status" value="1"/>
</dbReference>
<dbReference type="PRINTS" id="PR00789">
    <property type="entry name" value="OSIALOPTASE"/>
</dbReference>
<dbReference type="SUPFAM" id="SSF53067">
    <property type="entry name" value="Actin-like ATPase domain"/>
    <property type="match status" value="1"/>
</dbReference>
<sequence length="360" mass="37906">MRILGIETSCDETAASVVLRDEEGRGRILGDVVLSQLEEHSAYGGVVPEIAARAHVEALDALIEEALLRAGVTLRDIDAVAATSGPGLIGGLIVGLMTGKAIARATGKPLYAVNHLEGHALTARLTDGLSFPYLMLLVSGGHTQLILVKGVGEYERWGTTIDDALGEAFDKTAKLLGLPYPGGPAVERAAQAGNAERFDFPRPLVGDARLDFSFSGLKTAVRQAAQSLGPVTDQDIADVCASFQRAISRTLRDRVGRGLKRFRADFASVDQPALVVAGGVAANQTLRRTLQSLCDEHGFRFIAPPLQLCTDNAAMIAWAGAERLAAGLPADGLDAAPRSRWPLDSEAKALIGSGRRGAKA</sequence>
<evidence type="ECO:0000255" key="1">
    <source>
        <dbReference type="HAMAP-Rule" id="MF_01445"/>
    </source>
</evidence>